<organism>
    <name type="scientific">Bradyrhizobium sp. (strain BTAi1 / ATCC BAA-1182)</name>
    <dbReference type="NCBI Taxonomy" id="288000"/>
    <lineage>
        <taxon>Bacteria</taxon>
        <taxon>Pseudomonadati</taxon>
        <taxon>Pseudomonadota</taxon>
        <taxon>Alphaproteobacteria</taxon>
        <taxon>Hyphomicrobiales</taxon>
        <taxon>Nitrobacteraceae</taxon>
        <taxon>Bradyrhizobium</taxon>
    </lineage>
</organism>
<evidence type="ECO:0000255" key="1">
    <source>
        <dbReference type="HAMAP-Rule" id="MF_00802"/>
    </source>
</evidence>
<reference key="1">
    <citation type="journal article" date="2007" name="Science">
        <title>Legumes symbioses: absence of nod genes in photosynthetic bradyrhizobia.</title>
        <authorList>
            <person name="Giraud E."/>
            <person name="Moulin L."/>
            <person name="Vallenet D."/>
            <person name="Barbe V."/>
            <person name="Cytryn E."/>
            <person name="Avarre J.-C."/>
            <person name="Jaubert M."/>
            <person name="Simon D."/>
            <person name="Cartieaux F."/>
            <person name="Prin Y."/>
            <person name="Bena G."/>
            <person name="Hannibal L."/>
            <person name="Fardoux J."/>
            <person name="Kojadinovic M."/>
            <person name="Vuillet L."/>
            <person name="Lajus A."/>
            <person name="Cruveiller S."/>
            <person name="Rouy Z."/>
            <person name="Mangenot S."/>
            <person name="Segurens B."/>
            <person name="Dossat C."/>
            <person name="Franck W.L."/>
            <person name="Chang W.-S."/>
            <person name="Saunders E."/>
            <person name="Bruce D."/>
            <person name="Richardson P."/>
            <person name="Normand P."/>
            <person name="Dreyfus B."/>
            <person name="Pignol D."/>
            <person name="Stacey G."/>
            <person name="Emerich D."/>
            <person name="Vermeglio A."/>
            <person name="Medigue C."/>
            <person name="Sadowsky M."/>
        </authorList>
    </citation>
    <scope>NUCLEOTIDE SEQUENCE [LARGE SCALE GENOMIC DNA]</scope>
    <source>
        <strain>BTAi1 / ATCC BAA-1182</strain>
    </source>
</reference>
<gene>
    <name evidence="1" type="primary">glnE</name>
    <name type="ordered locus">BBta_3086</name>
</gene>
<dbReference type="EC" id="2.7.7.89" evidence="1"/>
<dbReference type="EC" id="2.7.7.42" evidence="1"/>
<dbReference type="EMBL" id="CP000494">
    <property type="protein sequence ID" value="ABQ35204.1"/>
    <property type="molecule type" value="Genomic_DNA"/>
</dbReference>
<dbReference type="RefSeq" id="WP_012043222.1">
    <property type="nucleotide sequence ID" value="NC_009485.1"/>
</dbReference>
<dbReference type="SMR" id="A5EGB0"/>
<dbReference type="STRING" id="288000.BBta_3086"/>
<dbReference type="KEGG" id="bbt:BBta_3086"/>
<dbReference type="eggNOG" id="COG1391">
    <property type="taxonomic scope" value="Bacteria"/>
</dbReference>
<dbReference type="HOGENOM" id="CLU_006233_0_0_5"/>
<dbReference type="OrthoDB" id="9759366at2"/>
<dbReference type="Proteomes" id="UP000000246">
    <property type="component" value="Chromosome"/>
</dbReference>
<dbReference type="GO" id="GO:0005829">
    <property type="term" value="C:cytosol"/>
    <property type="evidence" value="ECO:0007669"/>
    <property type="project" value="TreeGrafter"/>
</dbReference>
<dbReference type="GO" id="GO:0008882">
    <property type="term" value="F:[glutamate-ammonia-ligase] adenylyltransferase activity"/>
    <property type="evidence" value="ECO:0007669"/>
    <property type="project" value="UniProtKB-UniRule"/>
</dbReference>
<dbReference type="GO" id="GO:0047388">
    <property type="term" value="F:[glutamine synthetase]-adenylyl-L-tyrosine phosphorylase activity"/>
    <property type="evidence" value="ECO:0007669"/>
    <property type="project" value="UniProtKB-EC"/>
</dbReference>
<dbReference type="GO" id="GO:0005524">
    <property type="term" value="F:ATP binding"/>
    <property type="evidence" value="ECO:0007669"/>
    <property type="project" value="UniProtKB-UniRule"/>
</dbReference>
<dbReference type="GO" id="GO:0000287">
    <property type="term" value="F:magnesium ion binding"/>
    <property type="evidence" value="ECO:0007669"/>
    <property type="project" value="UniProtKB-UniRule"/>
</dbReference>
<dbReference type="GO" id="GO:0000820">
    <property type="term" value="P:regulation of glutamine family amino acid metabolic process"/>
    <property type="evidence" value="ECO:0007669"/>
    <property type="project" value="UniProtKB-UniRule"/>
</dbReference>
<dbReference type="CDD" id="cd05401">
    <property type="entry name" value="NT_GlnE_GlnD_like"/>
    <property type="match status" value="2"/>
</dbReference>
<dbReference type="FunFam" id="1.20.120.330:FF:000028">
    <property type="entry name" value="Bifunctional glutamine synthetase adenylyltransferase/adenylyl-removing enzyme"/>
    <property type="match status" value="1"/>
</dbReference>
<dbReference type="FunFam" id="3.30.460.10:FF:000081">
    <property type="entry name" value="Bifunctional glutamine synthetase adenylyltransferase/adenylyl-removing enzyme"/>
    <property type="match status" value="1"/>
</dbReference>
<dbReference type="Gene3D" id="3.30.460.10">
    <property type="entry name" value="Beta Polymerase, domain 2"/>
    <property type="match status" value="2"/>
</dbReference>
<dbReference type="Gene3D" id="1.20.120.330">
    <property type="entry name" value="Nucleotidyltransferases domain 2"/>
    <property type="match status" value="2"/>
</dbReference>
<dbReference type="HAMAP" id="MF_00802">
    <property type="entry name" value="GlnE"/>
    <property type="match status" value="1"/>
</dbReference>
<dbReference type="InterPro" id="IPR023057">
    <property type="entry name" value="GlnE"/>
</dbReference>
<dbReference type="InterPro" id="IPR005190">
    <property type="entry name" value="GlnE_rpt_dom"/>
</dbReference>
<dbReference type="InterPro" id="IPR043519">
    <property type="entry name" value="NT_sf"/>
</dbReference>
<dbReference type="InterPro" id="IPR013546">
    <property type="entry name" value="PII_UdlTrfase/GS_AdlTrfase"/>
</dbReference>
<dbReference type="NCBIfam" id="NF008292">
    <property type="entry name" value="PRK11072.1"/>
    <property type="match status" value="1"/>
</dbReference>
<dbReference type="NCBIfam" id="NF010706">
    <property type="entry name" value="PRK14108.1"/>
    <property type="match status" value="1"/>
</dbReference>
<dbReference type="PANTHER" id="PTHR30621:SF0">
    <property type="entry name" value="BIFUNCTIONAL GLUTAMINE SYNTHETASE ADENYLYLTRANSFERASE_ADENYLYL-REMOVING ENZYME"/>
    <property type="match status" value="1"/>
</dbReference>
<dbReference type="PANTHER" id="PTHR30621">
    <property type="entry name" value="GLUTAMINE SYNTHETASE ADENYLYLTRANSFERASE"/>
    <property type="match status" value="1"/>
</dbReference>
<dbReference type="Pfam" id="PF08335">
    <property type="entry name" value="GlnD_UR_UTase"/>
    <property type="match status" value="2"/>
</dbReference>
<dbReference type="Pfam" id="PF03710">
    <property type="entry name" value="GlnE"/>
    <property type="match status" value="2"/>
</dbReference>
<dbReference type="SUPFAM" id="SSF81301">
    <property type="entry name" value="Nucleotidyltransferase"/>
    <property type="match status" value="2"/>
</dbReference>
<dbReference type="SUPFAM" id="SSF81593">
    <property type="entry name" value="Nucleotidyltransferase substrate binding subunit/domain"/>
    <property type="match status" value="2"/>
</dbReference>
<proteinExistence type="inferred from homology"/>
<accession>A5EGB0</accession>
<protein>
    <recommendedName>
        <fullName evidence="1">Bifunctional glutamine synthetase adenylyltransferase/adenylyl-removing enzyme</fullName>
    </recommendedName>
    <alternativeName>
        <fullName evidence="1">ATP:glutamine synthetase adenylyltransferase</fullName>
    </alternativeName>
    <alternativeName>
        <fullName evidence="1">ATase</fullName>
    </alternativeName>
    <domain>
        <recommendedName>
            <fullName evidence="1">Glutamine synthetase adenylyl-L-tyrosine phosphorylase</fullName>
            <ecNumber evidence="1">2.7.7.89</ecNumber>
        </recommendedName>
        <alternativeName>
            <fullName evidence="1">Adenylyl removase</fullName>
            <shortName evidence="1">AR</shortName>
            <shortName evidence="1">AT-N</shortName>
        </alternativeName>
    </domain>
    <domain>
        <recommendedName>
            <fullName evidence="1">Glutamine synthetase adenylyl transferase</fullName>
            <ecNumber evidence="1">2.7.7.42</ecNumber>
        </recommendedName>
        <alternativeName>
            <fullName evidence="1">Adenylyl transferase</fullName>
            <shortName evidence="1">AT</shortName>
            <shortName evidence="1">AT-C</shortName>
        </alternativeName>
    </domain>
</protein>
<feature type="chain" id="PRO_1000212983" description="Bifunctional glutamine synthetase adenylyltransferase/adenylyl-removing enzyme">
    <location>
        <begin position="1"/>
        <end position="985"/>
    </location>
</feature>
<feature type="region of interest" description="Adenylyl removase" evidence="1">
    <location>
        <begin position="1"/>
        <end position="472"/>
    </location>
</feature>
<feature type="region of interest" description="Adenylyl transferase" evidence="1">
    <location>
        <begin position="477"/>
        <end position="985"/>
    </location>
</feature>
<comment type="function">
    <text evidence="1">Involved in the regulation of glutamine synthetase GlnA, a key enzyme in the process to assimilate ammonia. When cellular nitrogen levels are high, the C-terminal adenylyl transferase (AT) inactivates GlnA by covalent transfer of an adenylyl group from ATP to specific tyrosine residue of GlnA, thus reducing its activity. Conversely, when nitrogen levels are low, the N-terminal adenylyl removase (AR) activates GlnA by removing the adenylyl group by phosphorolysis, increasing its activity. The regulatory region of GlnE binds the signal transduction protein PII (GlnB) which indicates the nitrogen status of the cell.</text>
</comment>
<comment type="catalytic activity">
    <reaction evidence="1">
        <text>[glutamine synthetase]-O(4)-(5'-adenylyl)-L-tyrosine + phosphate = [glutamine synthetase]-L-tyrosine + ADP</text>
        <dbReference type="Rhea" id="RHEA:43716"/>
        <dbReference type="Rhea" id="RHEA-COMP:10660"/>
        <dbReference type="Rhea" id="RHEA-COMP:10661"/>
        <dbReference type="ChEBI" id="CHEBI:43474"/>
        <dbReference type="ChEBI" id="CHEBI:46858"/>
        <dbReference type="ChEBI" id="CHEBI:83624"/>
        <dbReference type="ChEBI" id="CHEBI:456216"/>
        <dbReference type="EC" id="2.7.7.89"/>
    </reaction>
</comment>
<comment type="catalytic activity">
    <reaction evidence="1">
        <text>[glutamine synthetase]-L-tyrosine + ATP = [glutamine synthetase]-O(4)-(5'-adenylyl)-L-tyrosine + diphosphate</text>
        <dbReference type="Rhea" id="RHEA:18589"/>
        <dbReference type="Rhea" id="RHEA-COMP:10660"/>
        <dbReference type="Rhea" id="RHEA-COMP:10661"/>
        <dbReference type="ChEBI" id="CHEBI:30616"/>
        <dbReference type="ChEBI" id="CHEBI:33019"/>
        <dbReference type="ChEBI" id="CHEBI:46858"/>
        <dbReference type="ChEBI" id="CHEBI:83624"/>
        <dbReference type="EC" id="2.7.7.42"/>
    </reaction>
</comment>
<comment type="cofactor">
    <cofactor evidence="1">
        <name>Mg(2+)</name>
        <dbReference type="ChEBI" id="CHEBI:18420"/>
    </cofactor>
</comment>
<comment type="similarity">
    <text evidence="1">Belongs to the GlnE family.</text>
</comment>
<sequence length="985" mass="109590">MTSSAPGNADGQILAERFVSGPHVRAPDKAEHRLNEWLAELEPSLAASLRALLAKGLPRSILLGIAECSPYLFDLVRADARRFERLLRSEPQAHLAELISRTGREVFAATSEADVMRLLRQLKSEAALLIALCDIGGVWPVMQVTAALTDVAVSAVQMALRYLLRQEAVRGRLAPRDADDPEQGCGLFVLAMGKMGAGELNYSSDIDLIVFFDPEVHSLARDIEPQPFFVRVTQALARLLQSRTADGYVFRVDLRLRPDPASTQVAMSTEAALHYYEREGRTWERAAMIKARICAGDVAAGEAMLAELSPFVWRKHLDFQALTDVHDMKRQMQVYRGHSEIAVEGHNVKVGRGGIREIEFFAQTQQLIAGGRHPELRVRPTLQALGVLTASKWITEQARDELTTAYEFLRRVEHRLQMMADEQIHSLPDDAEGVSRFACFFGYESRERFASDLLFHLNIVQGHYARLFEGDPTGTVSLPPVNYGAGPDEPRLMEHLAGLGFRDPVMVAKTLQQWLAGEYRVFRTEATRTSFTEFLPALIDGLAHADEPDRAVVAFDRFLQALQLGGRLISLLGQNRDLVALVALVLGAAPRLGDMLARQPRLMDGLIDPRFFGAMPDKRELSQRLAATLQDAGTYEEFLDRLRLFGQESLFLIGTRILSGTVSAQQAGTAFADVAEGIVHTVHGLVTERFAAQHGRIKGQETAIIAMGRLGAREMTASSDLDLILLYDFDADEPDSDGERSLQGAHYFARFTQRLISAFTSRTNYGVLYDIDMRLRPSGRAGPLASHLDSFAHYQEREAWTWEHMALTRARVISASPAFRARIEEIIQTALRRPRDPVAIARDVADMRRAIAAEKGEADLWDLKHAAGGMVDIDFVAQYLQLVHAATKPEILDVSSLQVLDHAERLGVLPRADAVILRHAARLYHDLTQILRLCVSDKFKPDQAGEDLLRVLARAGDAPDFSALEARLRETQSEVRRVFTSLLEE</sequence>
<keyword id="KW-0067">ATP-binding</keyword>
<keyword id="KW-0460">Magnesium</keyword>
<keyword id="KW-0511">Multifunctional enzyme</keyword>
<keyword id="KW-0547">Nucleotide-binding</keyword>
<keyword id="KW-0548">Nucleotidyltransferase</keyword>
<keyword id="KW-1185">Reference proteome</keyword>
<keyword id="KW-0808">Transferase</keyword>
<name>GLNE_BRASB</name>